<accession>C4ZTE7</accession>
<keyword id="KW-0028">Amino-acid biosynthesis</keyword>
<keyword id="KW-0057">Aromatic amino acid biosynthesis</keyword>
<keyword id="KW-0067">ATP-binding</keyword>
<keyword id="KW-0963">Cytoplasm</keyword>
<keyword id="KW-0418">Kinase</keyword>
<keyword id="KW-0460">Magnesium</keyword>
<keyword id="KW-0479">Metal-binding</keyword>
<keyword id="KW-0547">Nucleotide-binding</keyword>
<keyword id="KW-0808">Transferase</keyword>
<dbReference type="EC" id="2.7.1.71" evidence="1"/>
<dbReference type="EMBL" id="CP001396">
    <property type="protein sequence ID" value="ACR65546.1"/>
    <property type="molecule type" value="Genomic_DNA"/>
</dbReference>
<dbReference type="RefSeq" id="WP_000193393.1">
    <property type="nucleotide sequence ID" value="NC_012759.1"/>
</dbReference>
<dbReference type="SMR" id="C4ZTE7"/>
<dbReference type="GeneID" id="93777073"/>
<dbReference type="KEGG" id="ebw:BWG_0272"/>
<dbReference type="HOGENOM" id="CLU_057607_4_3_6"/>
<dbReference type="UniPathway" id="UPA00053">
    <property type="reaction ID" value="UER00088"/>
</dbReference>
<dbReference type="GO" id="GO:0005829">
    <property type="term" value="C:cytosol"/>
    <property type="evidence" value="ECO:0007669"/>
    <property type="project" value="TreeGrafter"/>
</dbReference>
<dbReference type="GO" id="GO:0005524">
    <property type="term" value="F:ATP binding"/>
    <property type="evidence" value="ECO:0007669"/>
    <property type="project" value="UniProtKB-UniRule"/>
</dbReference>
<dbReference type="GO" id="GO:0000287">
    <property type="term" value="F:magnesium ion binding"/>
    <property type="evidence" value="ECO:0007669"/>
    <property type="project" value="UniProtKB-UniRule"/>
</dbReference>
<dbReference type="GO" id="GO:0004765">
    <property type="term" value="F:shikimate kinase activity"/>
    <property type="evidence" value="ECO:0007669"/>
    <property type="project" value="UniProtKB-UniRule"/>
</dbReference>
<dbReference type="GO" id="GO:0008652">
    <property type="term" value="P:amino acid biosynthetic process"/>
    <property type="evidence" value="ECO:0007669"/>
    <property type="project" value="UniProtKB-KW"/>
</dbReference>
<dbReference type="GO" id="GO:0009073">
    <property type="term" value="P:aromatic amino acid family biosynthetic process"/>
    <property type="evidence" value="ECO:0007669"/>
    <property type="project" value="UniProtKB-KW"/>
</dbReference>
<dbReference type="GO" id="GO:0009423">
    <property type="term" value="P:chorismate biosynthetic process"/>
    <property type="evidence" value="ECO:0007669"/>
    <property type="project" value="UniProtKB-UniRule"/>
</dbReference>
<dbReference type="CDD" id="cd00464">
    <property type="entry name" value="SK"/>
    <property type="match status" value="1"/>
</dbReference>
<dbReference type="FunFam" id="3.40.50.300:FF:000408">
    <property type="entry name" value="Shikimate kinase 2"/>
    <property type="match status" value="1"/>
</dbReference>
<dbReference type="Gene3D" id="3.40.50.300">
    <property type="entry name" value="P-loop containing nucleotide triphosphate hydrolases"/>
    <property type="match status" value="1"/>
</dbReference>
<dbReference type="HAMAP" id="MF_00109">
    <property type="entry name" value="Shikimate_kinase"/>
    <property type="match status" value="1"/>
</dbReference>
<dbReference type="HAMAP" id="MF_01269">
    <property type="entry name" value="Shikimate_kinase_2"/>
    <property type="match status" value="1"/>
</dbReference>
<dbReference type="InterPro" id="IPR027417">
    <property type="entry name" value="P-loop_NTPase"/>
</dbReference>
<dbReference type="InterPro" id="IPR031322">
    <property type="entry name" value="Shikimate/glucono_kinase"/>
</dbReference>
<dbReference type="InterPro" id="IPR000623">
    <property type="entry name" value="Shikimate_kinase/TSH1"/>
</dbReference>
<dbReference type="InterPro" id="IPR027544">
    <property type="entry name" value="Shikimate_kinase_2"/>
</dbReference>
<dbReference type="InterPro" id="IPR023000">
    <property type="entry name" value="Shikimate_kinase_CS"/>
</dbReference>
<dbReference type="NCBIfam" id="NF002988">
    <property type="entry name" value="PRK03731.1"/>
    <property type="match status" value="1"/>
</dbReference>
<dbReference type="PANTHER" id="PTHR21087">
    <property type="entry name" value="SHIKIMATE KINASE"/>
    <property type="match status" value="1"/>
</dbReference>
<dbReference type="PANTHER" id="PTHR21087:SF21">
    <property type="entry name" value="SHIKIMATE KINASE 2"/>
    <property type="match status" value="1"/>
</dbReference>
<dbReference type="Pfam" id="PF01202">
    <property type="entry name" value="SKI"/>
    <property type="match status" value="1"/>
</dbReference>
<dbReference type="PRINTS" id="PR01100">
    <property type="entry name" value="SHIKIMTKNASE"/>
</dbReference>
<dbReference type="SUPFAM" id="SSF52540">
    <property type="entry name" value="P-loop containing nucleoside triphosphate hydrolases"/>
    <property type="match status" value="1"/>
</dbReference>
<dbReference type="PROSITE" id="PS01128">
    <property type="entry name" value="SHIKIMATE_KINASE"/>
    <property type="match status" value="1"/>
</dbReference>
<protein>
    <recommendedName>
        <fullName evidence="1">Shikimate kinase 2</fullName>
        <shortName evidence="1">SK 2</shortName>
        <ecNumber evidence="1">2.7.1.71</ecNumber>
    </recommendedName>
</protein>
<evidence type="ECO:0000255" key="1">
    <source>
        <dbReference type="HAMAP-Rule" id="MF_01269"/>
    </source>
</evidence>
<comment type="function">
    <text evidence="1">Catalyzes the specific phosphorylation of the 3-hydroxyl group of shikimic acid using ATP as a cosubstrate.</text>
</comment>
<comment type="catalytic activity">
    <reaction evidence="1">
        <text>shikimate + ATP = 3-phosphoshikimate + ADP + H(+)</text>
        <dbReference type="Rhea" id="RHEA:13121"/>
        <dbReference type="ChEBI" id="CHEBI:15378"/>
        <dbReference type="ChEBI" id="CHEBI:30616"/>
        <dbReference type="ChEBI" id="CHEBI:36208"/>
        <dbReference type="ChEBI" id="CHEBI:145989"/>
        <dbReference type="ChEBI" id="CHEBI:456216"/>
        <dbReference type="EC" id="2.7.1.71"/>
    </reaction>
</comment>
<comment type="cofactor">
    <cofactor evidence="1">
        <name>Mg(2+)</name>
        <dbReference type="ChEBI" id="CHEBI:18420"/>
    </cofactor>
    <text evidence="1">Binds 1 Mg(2+) ion per subunit.</text>
</comment>
<comment type="pathway">
    <text evidence="1">Metabolic intermediate biosynthesis; chorismate biosynthesis; chorismate from D-erythrose 4-phosphate and phosphoenolpyruvate: step 5/7.</text>
</comment>
<comment type="subunit">
    <text evidence="1">Monomer.</text>
</comment>
<comment type="subcellular location">
    <subcellularLocation>
        <location evidence="1">Cytoplasm</location>
    </subcellularLocation>
</comment>
<comment type="domain">
    <text evidence="1">The LID domain closes over the active site upon ATP binding.</text>
</comment>
<comment type="similarity">
    <text evidence="1">Belongs to the shikimate kinase family. AroL subfamily.</text>
</comment>
<reference key="1">
    <citation type="journal article" date="2009" name="J. Bacteriol.">
        <title>Genomic sequencing reveals regulatory mutations and recombinational events in the widely used MC4100 lineage of Escherichia coli K-12.</title>
        <authorList>
            <person name="Ferenci T."/>
            <person name="Zhou Z."/>
            <person name="Betteridge T."/>
            <person name="Ren Y."/>
            <person name="Liu Y."/>
            <person name="Feng L."/>
            <person name="Reeves P.R."/>
            <person name="Wang L."/>
        </authorList>
    </citation>
    <scope>NUCLEOTIDE SEQUENCE [LARGE SCALE GENOMIC DNA]</scope>
    <source>
        <strain>K12 / MC4100 / BW2952</strain>
    </source>
</reference>
<proteinExistence type="inferred from homology"/>
<organism>
    <name type="scientific">Escherichia coli (strain K12 / MC4100 / BW2952)</name>
    <dbReference type="NCBI Taxonomy" id="595496"/>
    <lineage>
        <taxon>Bacteria</taxon>
        <taxon>Pseudomonadati</taxon>
        <taxon>Pseudomonadota</taxon>
        <taxon>Gammaproteobacteria</taxon>
        <taxon>Enterobacterales</taxon>
        <taxon>Enterobacteriaceae</taxon>
        <taxon>Escherichia</taxon>
    </lineage>
</organism>
<sequence>MTQPLFLIGPRGCGKTTVGMALADSLNRRFVDTDQWLQSQLNMTVAEIVEREEWAGFRARETAALEAVTAPSTVIATGGGIILTEFNRHFMQNNGIVVYLCAPVSVLVNRLQAAPEEDLRPTLTGKPLSEEVQEVLEERDALYREVAHIIIDATNEPSQVISEIRSALAQTINC</sequence>
<gene>
    <name evidence="1" type="primary">aroL</name>
    <name type="ordered locus">BWG_0272</name>
</gene>
<name>AROL_ECOBW</name>
<feature type="chain" id="PRO_1000214149" description="Shikimate kinase 2">
    <location>
        <begin position="1"/>
        <end position="174"/>
    </location>
</feature>
<feature type="region of interest" description="LID domain">
    <location>
        <begin position="112"/>
        <end position="126"/>
    </location>
</feature>
<feature type="binding site" evidence="1">
    <location>
        <begin position="12"/>
        <end position="17"/>
    </location>
    <ligand>
        <name>ATP</name>
        <dbReference type="ChEBI" id="CHEBI:30616"/>
    </ligand>
</feature>
<feature type="binding site" evidence="1">
    <location>
        <position position="16"/>
    </location>
    <ligand>
        <name>Mg(2+)</name>
        <dbReference type="ChEBI" id="CHEBI:18420"/>
    </ligand>
</feature>
<feature type="binding site" evidence="1">
    <location>
        <position position="32"/>
    </location>
    <ligand>
        <name>Mg(2+)</name>
        <dbReference type="ChEBI" id="CHEBI:18420"/>
    </ligand>
</feature>
<feature type="binding site" evidence="1">
    <location>
        <position position="34"/>
    </location>
    <ligand>
        <name>substrate</name>
    </ligand>
</feature>
<feature type="binding site" evidence="1">
    <location>
        <position position="58"/>
    </location>
    <ligand>
        <name>substrate</name>
    </ligand>
</feature>
<feature type="binding site" evidence="1">
    <location>
        <position position="79"/>
    </location>
    <ligand>
        <name>substrate</name>
    </ligand>
</feature>
<feature type="binding site" evidence="1">
    <location>
        <position position="120"/>
    </location>
    <ligand>
        <name>ATP</name>
        <dbReference type="ChEBI" id="CHEBI:30616"/>
    </ligand>
</feature>
<feature type="binding site" evidence="1">
    <location>
        <position position="139"/>
    </location>
    <ligand>
        <name>substrate</name>
    </ligand>
</feature>